<dbReference type="EMBL" id="AF026083">
    <property type="protein sequence ID" value="AAC12267.1"/>
    <property type="molecule type" value="Genomic_DNA"/>
</dbReference>
<dbReference type="BMRB" id="O73692"/>
<dbReference type="SMR" id="O73692"/>
<dbReference type="Proteomes" id="UP000694412">
    <property type="component" value="Unplaced"/>
</dbReference>
<dbReference type="GO" id="GO:0005737">
    <property type="term" value="C:cytoplasm"/>
    <property type="evidence" value="ECO:0000250"/>
    <property type="project" value="UniProtKB"/>
</dbReference>
<dbReference type="GO" id="GO:0005654">
    <property type="term" value="C:nucleoplasm"/>
    <property type="evidence" value="ECO:0000247"/>
    <property type="project" value="AgBase"/>
</dbReference>
<dbReference type="GO" id="GO:0005634">
    <property type="term" value="C:nucleus"/>
    <property type="evidence" value="ECO:0000250"/>
    <property type="project" value="UniProtKB"/>
</dbReference>
<dbReference type="GO" id="GO:0003677">
    <property type="term" value="F:DNA binding"/>
    <property type="evidence" value="ECO:0000247"/>
    <property type="project" value="AgBase"/>
</dbReference>
<dbReference type="GO" id="GO:0003700">
    <property type="term" value="F:DNA-binding transcription factor activity"/>
    <property type="evidence" value="ECO:0000247"/>
    <property type="project" value="AgBase"/>
</dbReference>
<dbReference type="GO" id="GO:0000981">
    <property type="term" value="F:DNA-binding transcription factor activity, RNA polymerase II-specific"/>
    <property type="evidence" value="ECO:0007669"/>
    <property type="project" value="TreeGrafter"/>
</dbReference>
<dbReference type="GO" id="GO:0010385">
    <property type="term" value="F:double-stranded methylated DNA binding"/>
    <property type="evidence" value="ECO:0000250"/>
    <property type="project" value="UniProtKB"/>
</dbReference>
<dbReference type="GO" id="GO:0044729">
    <property type="term" value="F:hemi-methylated DNA-binding"/>
    <property type="evidence" value="ECO:0000250"/>
    <property type="project" value="UniProtKB"/>
</dbReference>
<dbReference type="GO" id="GO:0035035">
    <property type="term" value="F:histone acetyltransferase binding"/>
    <property type="evidence" value="ECO:0000247"/>
    <property type="project" value="AgBase"/>
</dbReference>
<dbReference type="GO" id="GO:1990841">
    <property type="term" value="F:promoter-specific chromatin binding"/>
    <property type="evidence" value="ECO:0000250"/>
    <property type="project" value="UniProtKB"/>
</dbReference>
<dbReference type="GO" id="GO:0000978">
    <property type="term" value="F:RNA polymerase II cis-regulatory region sequence-specific DNA binding"/>
    <property type="evidence" value="ECO:0007669"/>
    <property type="project" value="TreeGrafter"/>
</dbReference>
<dbReference type="GO" id="GO:0000977">
    <property type="term" value="F:RNA polymerase II transcription regulatory region sequence-specific DNA binding"/>
    <property type="evidence" value="ECO:0000247"/>
    <property type="project" value="AgBase"/>
</dbReference>
<dbReference type="GO" id="GO:0043565">
    <property type="term" value="F:sequence-specific DNA binding"/>
    <property type="evidence" value="ECO:0000247"/>
    <property type="project" value="AgBase"/>
</dbReference>
<dbReference type="GO" id="GO:0000976">
    <property type="term" value="F:transcription cis-regulatory region binding"/>
    <property type="evidence" value="ECO:0000247"/>
    <property type="project" value="AgBase"/>
</dbReference>
<dbReference type="GO" id="GO:0008270">
    <property type="term" value="F:zinc ion binding"/>
    <property type="evidence" value="ECO:0000250"/>
    <property type="project" value="UniProtKB"/>
</dbReference>
<dbReference type="GO" id="GO:0098759">
    <property type="term" value="P:cellular response to interleukin-8"/>
    <property type="evidence" value="ECO:0000250"/>
    <property type="project" value="AgBase"/>
</dbReference>
<dbReference type="GO" id="GO:0032922">
    <property type="term" value="P:circadian regulation of gene expression"/>
    <property type="evidence" value="ECO:0000250"/>
    <property type="project" value="UniProtKB"/>
</dbReference>
<dbReference type="GO" id="GO:0070498">
    <property type="term" value="P:interleukin-1-mediated signaling pathway"/>
    <property type="evidence" value="ECO:0000247"/>
    <property type="project" value="AgBase"/>
</dbReference>
<dbReference type="GO" id="GO:0045893">
    <property type="term" value="P:positive regulation of DNA-templated transcription"/>
    <property type="evidence" value="ECO:0000250"/>
    <property type="project" value="UniProtKB"/>
</dbReference>
<dbReference type="GO" id="GO:0045944">
    <property type="term" value="P:positive regulation of transcription by RNA polymerase II"/>
    <property type="evidence" value="ECO:0000250"/>
    <property type="project" value="UniProtKB"/>
</dbReference>
<dbReference type="GO" id="GO:0033233">
    <property type="term" value="P:regulation of protein sumoylation"/>
    <property type="evidence" value="ECO:0000247"/>
    <property type="project" value="AgBase"/>
</dbReference>
<dbReference type="GO" id="GO:0006366">
    <property type="term" value="P:transcription by RNA polymerase II"/>
    <property type="evidence" value="ECO:0000247"/>
    <property type="project" value="AgBase"/>
</dbReference>
<dbReference type="FunFam" id="3.30.160.60:FF:000769">
    <property type="entry name" value="Early growth response 2b"/>
    <property type="match status" value="1"/>
</dbReference>
<dbReference type="FunFam" id="3.30.160.60:FF:003460">
    <property type="entry name" value="Early growth response protein 1"/>
    <property type="match status" value="1"/>
</dbReference>
<dbReference type="FunFam" id="3.30.160.60:FF:000419">
    <property type="entry name" value="Early growth response protein 4"/>
    <property type="match status" value="1"/>
</dbReference>
<dbReference type="Gene3D" id="3.30.160.60">
    <property type="entry name" value="Classic Zinc Finger"/>
    <property type="match status" value="3"/>
</dbReference>
<dbReference type="InterPro" id="IPR021839">
    <property type="entry name" value="EGR1_C"/>
</dbReference>
<dbReference type="InterPro" id="IPR036236">
    <property type="entry name" value="Znf_C2H2_sf"/>
</dbReference>
<dbReference type="InterPro" id="IPR013087">
    <property type="entry name" value="Znf_C2H2_type"/>
</dbReference>
<dbReference type="PANTHER" id="PTHR23235:SF42">
    <property type="entry name" value="EARLY GROWTH RESPONSE PROTEIN 1"/>
    <property type="match status" value="1"/>
</dbReference>
<dbReference type="PANTHER" id="PTHR23235">
    <property type="entry name" value="KRUEPPEL-LIKE TRANSCRIPTION FACTOR"/>
    <property type="match status" value="1"/>
</dbReference>
<dbReference type="Pfam" id="PF11914">
    <property type="entry name" value="DUF3432"/>
    <property type="match status" value="1"/>
</dbReference>
<dbReference type="Pfam" id="PF00096">
    <property type="entry name" value="zf-C2H2"/>
    <property type="match status" value="3"/>
</dbReference>
<dbReference type="SMART" id="SM00355">
    <property type="entry name" value="ZnF_C2H2"/>
    <property type="match status" value="3"/>
</dbReference>
<dbReference type="SUPFAM" id="SSF57667">
    <property type="entry name" value="beta-beta-alpha zinc fingers"/>
    <property type="match status" value="2"/>
</dbReference>
<dbReference type="PROSITE" id="PS00028">
    <property type="entry name" value="ZINC_FINGER_C2H2_1"/>
    <property type="match status" value="2"/>
</dbReference>
<dbReference type="PROSITE" id="PS50157">
    <property type="entry name" value="ZINC_FINGER_C2H2_2"/>
    <property type="match status" value="3"/>
</dbReference>
<protein>
    <recommendedName>
        <fullName>Early growth response protein 1</fullName>
        <shortName>EGR-1</shortName>
    </recommendedName>
    <alternativeName>
        <fullName evidence="5">Zinc finger protein ZENK</fullName>
    </alternativeName>
</protein>
<comment type="function">
    <text evidence="1 2">Transcriptional regulator. Recognizes and binds to the DNA sequence 5'-GCG(T/G)GGGCG-3'(EGR-site) in the promoter region of target genes (By similarity). Binds double-stranded target DNA, irrespective of the cytosine methylation status (By similarity). Regulates the transcription of numerous target genes, and thereby plays an important role in regulating the response to growth factors, DNA damage, and ischemia. Plays a role in the regulation of cell survival, proliferation and cell death. Mediates responses to ischemia and hypoxia; regulates the expression of proteins that are involved in inflammatory processes (By similarity). Plays a role in regulating the expression of circadian clock genes (By similarity).</text>
</comment>
<comment type="subcellular location">
    <subcellularLocation>
        <location evidence="2">Nucleus</location>
    </subcellularLocation>
    <subcellularLocation>
        <location evidence="2">Cytoplasm</location>
    </subcellularLocation>
</comment>
<comment type="domain">
    <text evidence="2">Binds to DNA motifs with the sequence 5'-GCG(T/G)GGGCG-3' via its C2H2-type zinc fingers. The first, most N-terminal zinc finger binds to the 3'-GCG motif, the middle zinc finger interacts with the central TGG motif, and the C-terminal zinc finger binds to the 5'-GCG motif. Binds double-stranded target DNA, irrespective of the cytosine methylation status. Has reduced affinity for target DNA where the cytosines have been oxidized to 5-hydroxymethylcytosine. Does not bind target DNA where the cytosines have been oxidized to 5-formylcytosine or 5-carboxylcytosine.</text>
</comment>
<comment type="similarity">
    <text evidence="6">Belongs to the EGR C2H2-type zinc-finger protein family.</text>
</comment>
<keyword id="KW-0010">Activator</keyword>
<keyword id="KW-0090">Biological rhythms</keyword>
<keyword id="KW-0963">Cytoplasm</keyword>
<keyword id="KW-0238">DNA-binding</keyword>
<keyword id="KW-0479">Metal-binding</keyword>
<keyword id="KW-0539">Nucleus</keyword>
<keyword id="KW-1185">Reference proteome</keyword>
<keyword id="KW-0677">Repeat</keyword>
<keyword id="KW-0804">Transcription</keyword>
<keyword id="KW-0805">Transcription regulation</keyword>
<keyword id="KW-0862">Zinc</keyword>
<keyword id="KW-0863">Zinc-finger</keyword>
<evidence type="ECO:0000250" key="1">
    <source>
        <dbReference type="UniProtKB" id="P08046"/>
    </source>
</evidence>
<evidence type="ECO:0000250" key="2">
    <source>
        <dbReference type="UniProtKB" id="P18146"/>
    </source>
</evidence>
<evidence type="ECO:0000255" key="3">
    <source>
        <dbReference type="PROSITE-ProRule" id="PRU00042"/>
    </source>
</evidence>
<evidence type="ECO:0000256" key="4">
    <source>
        <dbReference type="SAM" id="MobiDB-lite"/>
    </source>
</evidence>
<evidence type="ECO:0000303" key="5">
    <source>
    </source>
</evidence>
<evidence type="ECO:0000305" key="6"/>
<reference key="1">
    <citation type="journal article" date="1998" name="Mol. Biol. Evol.">
        <title>Evolutionary conservation of the immediate-early gene ZENK.</title>
        <authorList>
            <person name="Long K.D."/>
            <person name="Salbaum J.M."/>
        </authorList>
    </citation>
    <scope>NUCLEOTIDE SEQUENCE [GENOMIC DNA]</scope>
</reference>
<feature type="chain" id="PRO_0000047113" description="Early growth response protein 1">
    <location>
        <begin position="1" status="less than"/>
        <end position="194"/>
    </location>
</feature>
<feature type="zinc finger region" description="C2H2-type 1" evidence="3">
    <location>
        <begin position="1" status="less than"/>
        <end position="18"/>
    </location>
</feature>
<feature type="zinc finger region" description="C2H2-type 2" evidence="3">
    <location>
        <begin position="24"/>
        <end position="46"/>
    </location>
</feature>
<feature type="zinc finger region" description="C2H2-type 3" evidence="3">
    <location>
        <begin position="52"/>
        <end position="74"/>
    </location>
</feature>
<feature type="region of interest" description="Disordered" evidence="4">
    <location>
        <begin position="66"/>
        <end position="88"/>
    </location>
</feature>
<feature type="compositionally biased region" description="Basic residues" evidence="4">
    <location>
        <begin position="69"/>
        <end position="79"/>
    </location>
</feature>
<feature type="site" description="Interaction with DNA" evidence="1">
    <location>
        <position position="3"/>
    </location>
</feature>
<feature type="site" description="Interaction with DNA" evidence="1">
    <location>
        <position position="7"/>
    </location>
</feature>
<feature type="site" description="Interaction with DNA" evidence="2">
    <location>
        <position position="13"/>
    </location>
</feature>
<feature type="site" description="Interaction with DNA" evidence="1">
    <location>
        <position position="31"/>
    </location>
</feature>
<feature type="site" description="Interaction with DNA" evidence="2">
    <location>
        <position position="35"/>
    </location>
</feature>
<feature type="site" description="Interaction with DNA" evidence="2">
    <location>
        <position position="59"/>
    </location>
</feature>
<feature type="site" description="Interaction with DNA" evidence="2">
    <location>
        <position position="63"/>
    </location>
</feature>
<feature type="site" description="Interaction with DNA" evidence="2">
    <location>
        <position position="69"/>
    </location>
</feature>
<feature type="non-terminal residue">
    <location>
        <position position="1"/>
    </location>
</feature>
<proteinExistence type="inferred from homology"/>
<gene>
    <name type="primary">EGR1</name>
    <name evidence="5" type="synonym">ZENK</name>
</gene>
<accession>O73692</accession>
<name>EGR1_COTJA</name>
<organism>
    <name type="scientific">Coturnix japonica</name>
    <name type="common">Japanese quail</name>
    <name type="synonym">Coturnix coturnix japonica</name>
    <dbReference type="NCBI Taxonomy" id="93934"/>
    <lineage>
        <taxon>Eukaryota</taxon>
        <taxon>Metazoa</taxon>
        <taxon>Chordata</taxon>
        <taxon>Craniata</taxon>
        <taxon>Vertebrata</taxon>
        <taxon>Euteleostomi</taxon>
        <taxon>Archelosauria</taxon>
        <taxon>Archosauria</taxon>
        <taxon>Dinosauria</taxon>
        <taxon>Saurischia</taxon>
        <taxon>Theropoda</taxon>
        <taxon>Coelurosauria</taxon>
        <taxon>Aves</taxon>
        <taxon>Neognathae</taxon>
        <taxon>Galloanserae</taxon>
        <taxon>Galliformes</taxon>
        <taxon>Phasianidae</taxon>
        <taxon>Perdicinae</taxon>
        <taxon>Coturnix</taxon>
    </lineage>
</organism>
<sequence length="194" mass="21352">CDRRFSRSDELTRHIRIHTGQKPFQCRICMRNFSRSDHLTTHIRTHTGEKPFACDICGRKFARSDERKRHTKIHLRQKDKKVEKAASVSTTSSPVAAYSSSVATSYSSSIATTYPSPVRTVYSSPASSSYPSPAHTAFPSPSIATTYPSGTATFQTQVATSFPSPAVTNNFSSQVTSALSDMTSTFSPRTIEIC</sequence>